<organism>
    <name type="scientific">Varicella-zoster virus (strain Oka vaccine)</name>
    <name type="common">HHV-3</name>
    <name type="synonym">Human herpesvirus 3</name>
    <dbReference type="NCBI Taxonomy" id="341980"/>
    <lineage>
        <taxon>Viruses</taxon>
        <taxon>Duplodnaviria</taxon>
        <taxon>Heunggongvirae</taxon>
        <taxon>Peploviricota</taxon>
        <taxon>Herviviricetes</taxon>
        <taxon>Herpesvirales</taxon>
        <taxon>Orthoherpesviridae</taxon>
        <taxon>Alphaherpesvirinae</taxon>
        <taxon>Varicellovirus</taxon>
        <taxon>Varicellovirus humanalpha3</taxon>
        <taxon>Human herpesvirus 3</taxon>
    </lineage>
</organism>
<sequence length="661" mass="74273">MFSRFARSFSSDDRTRKSYDGSYQSFNAGERDLPTPTRDWCSISQRITSERVRDGCLIPTPGEALETAVKALSEKTDSLTSPVLQSTERHSVLLGLHHNNVPESLVVSCMSNDVHDGFMQRYMETIQRCLDDLKLSGDGLWWVYENTYWQYLKYTTGAEVPVTSEKVNKKSKSTVLLFSSVVANKPISRHPFKSKVINSDYRGICQELREALGAVQKYMYFMRPDDPTNPSPDTRIRVQEIAAYTATGYGWMLWFLDVVDARVCRHLKLQFRRIRGPRASVIPDDLLRRHLKTGPAVSAGTGVAFILAATTASALTALLRISVLWRKEEWRDGLNGTAAAIVAAVELITLLHHHFQYLINMMLIGYACWGDGGLNDPYILKALRAQGRFLYFAGQLVRTMSTHSWVVLETSTHMWFSRAVAQSILAHGGKPTKYYAQVLAASKRYTPLHLRRISEPSSVSDQPYIRFNRLGSPIGTGIGNLECVCLTGNYLSDDVNASSHVINTEAPLNSIAPDTNRQRTSRVLVRPDTGLDVTVRKNHCLDIGHTDGSPVDPTYPDHYTRIKAEYEGPVRDESNTMFDQRSDLRHIETQASLNDHVYENIPPKEVGFNSSSDLDVDSLNGYTSGDMHTDDDLSPDFIPNDVPVRCKTTVTFRKNTPKSHH</sequence>
<comment type="function">
    <text evidence="4 5 6">Plays a role in the activation of the host PI3K/AKT pathway to promote cell survival. Interacts with and activates PI3KR1 in order to phosphorylate host AKT on its activating residues. Activates the host AP-1 pathway by triggering phosphorylation of host ERK1/2. Participates in host BIM and BAD phosphorylation, leading to apoptosis inhibition.</text>
</comment>
<comment type="subcellular location">
    <subcellularLocation>
        <location evidence="4">Virion tegument</location>
    </subcellularLocation>
    <subcellularLocation>
        <location evidence="4">Host cytoplasm</location>
    </subcellularLocation>
    <subcellularLocation>
        <location evidence="7">Host membrane</location>
        <topology evidence="7">Multi-pass membrane protein</topology>
    </subcellularLocation>
</comment>
<comment type="PTM">
    <text evidence="1">Phosphorylated by host LCK. The phosphorylation seems to be lymphocyte-specific.</text>
</comment>
<comment type="similarity">
    <text evidence="7">Belongs to the herpesviridae HHV-1 VP11/12 protein family.</text>
</comment>
<accession>Q4JQW3</accession>
<keyword id="KW-1035">Host cytoplasm</keyword>
<keyword id="KW-1043">Host membrane</keyword>
<keyword id="KW-0945">Host-virus interaction</keyword>
<keyword id="KW-0472">Membrane</keyword>
<keyword id="KW-1119">Modulation of host cell apoptosis by virus</keyword>
<keyword id="KW-0804">Transcription</keyword>
<keyword id="KW-0805">Transcription regulation</keyword>
<keyword id="KW-0812">Transmembrane</keyword>
<keyword id="KW-1133">Transmembrane helix</keyword>
<keyword id="KW-0946">Virion</keyword>
<keyword id="KW-0920">Virion tegument</keyword>
<dbReference type="EMBL" id="AB097932">
    <property type="status" value="NOT_ANNOTATED_CDS"/>
    <property type="molecule type" value="Genomic_DNA"/>
</dbReference>
<dbReference type="EMBL" id="AB097933">
    <property type="status" value="NOT_ANNOTATED_CDS"/>
    <property type="molecule type" value="Genomic_DNA"/>
</dbReference>
<dbReference type="EMBL" id="DQ008354">
    <property type="protein sequence ID" value="AAY57683.1"/>
    <property type="molecule type" value="Genomic_DNA"/>
</dbReference>
<dbReference type="EMBL" id="DQ008355">
    <property type="protein sequence ID" value="AAY57754.1"/>
    <property type="molecule type" value="Genomic_DNA"/>
</dbReference>
<dbReference type="RefSeq" id="NP_040135.1">
    <property type="nucleotide sequence ID" value="NC_001348.1"/>
</dbReference>
<dbReference type="IntAct" id="Q4JQW3">
    <property type="interactions" value="13"/>
</dbReference>
<dbReference type="DNASU" id="1487655"/>
<dbReference type="GeneID" id="1487655"/>
<dbReference type="KEGG" id="vg:1487655"/>
<dbReference type="Proteomes" id="UP000002603">
    <property type="component" value="Genome"/>
</dbReference>
<dbReference type="Proteomes" id="UP000008504">
    <property type="component" value="Genome"/>
</dbReference>
<dbReference type="Proteomes" id="UP000008505">
    <property type="component" value="Genome"/>
</dbReference>
<dbReference type="Proteomes" id="UP000008506">
    <property type="component" value="Genome"/>
</dbReference>
<dbReference type="GO" id="GO:0030430">
    <property type="term" value="C:host cell cytoplasm"/>
    <property type="evidence" value="ECO:0007669"/>
    <property type="project" value="UniProtKB-SubCell"/>
</dbReference>
<dbReference type="GO" id="GO:0033644">
    <property type="term" value="C:host cell membrane"/>
    <property type="evidence" value="ECO:0007669"/>
    <property type="project" value="UniProtKB-SubCell"/>
</dbReference>
<dbReference type="GO" id="GO:0016020">
    <property type="term" value="C:membrane"/>
    <property type="evidence" value="ECO:0007669"/>
    <property type="project" value="UniProtKB-KW"/>
</dbReference>
<dbReference type="GO" id="GO:0019033">
    <property type="term" value="C:viral tegument"/>
    <property type="evidence" value="ECO:0007669"/>
    <property type="project" value="UniProtKB-SubCell"/>
</dbReference>
<dbReference type="GO" id="GO:0006355">
    <property type="term" value="P:regulation of DNA-templated transcription"/>
    <property type="evidence" value="ECO:0007669"/>
    <property type="project" value="InterPro"/>
</dbReference>
<dbReference type="GO" id="GO:0052150">
    <property type="term" value="P:symbiont-mediated perturbation of host apoptosis"/>
    <property type="evidence" value="ECO:0007669"/>
    <property type="project" value="UniProtKB-KW"/>
</dbReference>
<dbReference type="InterPro" id="IPR005051">
    <property type="entry name" value="Herpes_UL46"/>
</dbReference>
<dbReference type="Pfam" id="PF03387">
    <property type="entry name" value="Herpes_UL46"/>
    <property type="match status" value="1"/>
</dbReference>
<proteinExistence type="inferred from homology"/>
<name>TEG1_VZVO</name>
<reference key="1">
    <citation type="journal article" date="2002" name="J. Virol.">
        <title>Comparison of the complete DNA sequences of the Oka varicella vaccine and its parental virus.</title>
        <authorList>
            <person name="Gomi Y."/>
            <person name="Sunamachi H."/>
            <person name="Mori Y."/>
            <person name="Nagaike K."/>
            <person name="Takahashi M."/>
            <person name="Yamanishi K."/>
        </authorList>
    </citation>
    <scope>NUCLEOTIDE SEQUENCE [LARGE SCALE GENOMIC DNA]</scope>
    <source>
        <strain>Isolate Human/Japan/P-Oka/1970</strain>
        <strain>Oka varicella vaccine Biken (V-Oka-Biken)</strain>
    </source>
</reference>
<reference key="2">
    <citation type="journal article" date="2008" name="J. Virol.">
        <title>Complete DNA sequences of two oka strain varicella-zoster virus genomes.</title>
        <authorList>
            <person name="Tillieux S.L."/>
            <person name="Halsey W.S."/>
            <person name="Thomas E.S."/>
            <person name="Voycik J.J."/>
            <person name="Sathe G.M."/>
            <person name="Vassilev V."/>
        </authorList>
    </citation>
    <scope>NUCLEOTIDE SEQUENCE [LARGE SCALE GENOMIC DNA]</scope>
    <source>
        <strain>Oka varicella vaccine VarilRix (V-Oka-GSK)</strain>
        <strain>Oka varicella vaccine Varivax (V-Oka-Merck)</strain>
    </source>
</reference>
<reference key="3">
    <citation type="journal article" date="2012" name="J. Virol.">
        <title>Varicella-Zoster virus ORF12 protein triggers phosphorylation of ERK1/2 and inhibits apoptosis.</title>
        <authorList>
            <person name="Liu X."/>
            <person name="Li Q."/>
            <person name="Dowdell K."/>
            <person name="Fischer E.R."/>
            <person name="Cohen J.I."/>
        </authorList>
    </citation>
    <scope>FUNCTION</scope>
    <scope>SUBCELLULAR LOCATION</scope>
</reference>
<reference key="4">
    <citation type="journal article" date="2013" name="J. Virol.">
        <title>Varicella-zoster virus ORF12 protein activates the phosphatidylinositol 3-kinase/Akt pathway to regulate cell cycle progression.</title>
        <authorList>
            <person name="Liu X."/>
            <person name="Cohen J.I."/>
        </authorList>
    </citation>
    <scope>FUNCTION</scope>
</reference>
<reference key="5">
    <citation type="journal article" date="2014" name="J. Virol.">
        <title>Inhibition of Bim enhances replication of varicella-zoster virus and delays plaque formation in virus-infected cells.</title>
        <authorList>
            <person name="Liu X."/>
            <person name="Cohen J.I."/>
        </authorList>
    </citation>
    <scope>FUNCTION</scope>
</reference>
<organismHost>
    <name type="scientific">Homo sapiens</name>
    <name type="common">Human</name>
    <dbReference type="NCBI Taxonomy" id="9606"/>
</organismHost>
<gene>
    <name type="ORF">ORF12</name>
</gene>
<feature type="chain" id="PRO_0000385463" description="Tegument protein UL46 homolog">
    <location>
        <begin position="1"/>
        <end position="661"/>
    </location>
</feature>
<feature type="transmembrane region" description="Helical" evidence="2">
    <location>
        <begin position="299"/>
        <end position="319"/>
    </location>
</feature>
<feature type="transmembrane region" description="Helical" evidence="2">
    <location>
        <begin position="339"/>
        <end position="359"/>
    </location>
</feature>
<feature type="region of interest" description="Disordered" evidence="3">
    <location>
        <begin position="1"/>
        <end position="31"/>
    </location>
</feature>
<feature type="compositionally biased region" description="Basic and acidic residues" evidence="3">
    <location>
        <begin position="10"/>
        <end position="19"/>
    </location>
</feature>
<protein>
    <recommendedName>
        <fullName>Tegument protein UL46 homolog</fullName>
    </recommendedName>
    <alternativeName>
        <fullName>Tegument protein VP11/12 homolog</fullName>
    </alternativeName>
</protein>
<evidence type="ECO:0000250" key="1">
    <source>
        <dbReference type="UniProtKB" id="P10230"/>
    </source>
</evidence>
<evidence type="ECO:0000255" key="2"/>
<evidence type="ECO:0000256" key="3">
    <source>
        <dbReference type="SAM" id="MobiDB-lite"/>
    </source>
</evidence>
<evidence type="ECO:0000269" key="4">
    <source>
    </source>
</evidence>
<evidence type="ECO:0000269" key="5">
    <source>
    </source>
</evidence>
<evidence type="ECO:0000269" key="6">
    <source>
    </source>
</evidence>
<evidence type="ECO:0000305" key="7"/>